<sequence length="281" mass="30478">MITSAHIDDIRTQVRAWRAKGETVAFVPTMGNLHQGHITLVKEAASKCDHVVASIFVNPMQFGQNEDLDAYPRTLAADSEALTAAGAELLFTPTPTVMYPKGLEQQTYVEVPGISNVLCGASRPGHFRGVATIVCKLFNIVQPDVALFGNKDYQQLLVIKTMVEDLSLPIEIIGVDTIREDSGLAMSSRNGYLTAAEKAAAPALKQAIDAMAAGIKQGESFEQMTEQAKACLVAAGFTPDYLEIRHAHTLEQAQNQDHALVILAAAYIGKARLIDNLRFDR</sequence>
<gene>
    <name evidence="1" type="primary">panC</name>
    <name type="ordered locus">Shew185_0844</name>
</gene>
<name>PANC_SHEB8</name>
<feature type="chain" id="PRO_1000097109" description="Pantothenate synthetase">
    <location>
        <begin position="1"/>
        <end position="281"/>
    </location>
</feature>
<feature type="active site" description="Proton donor" evidence="1">
    <location>
        <position position="37"/>
    </location>
</feature>
<feature type="binding site" evidence="1">
    <location>
        <begin position="30"/>
        <end position="37"/>
    </location>
    <ligand>
        <name>ATP</name>
        <dbReference type="ChEBI" id="CHEBI:30616"/>
    </ligand>
</feature>
<feature type="binding site" evidence="1">
    <location>
        <position position="61"/>
    </location>
    <ligand>
        <name>(R)-pantoate</name>
        <dbReference type="ChEBI" id="CHEBI:15980"/>
    </ligand>
</feature>
<feature type="binding site" evidence="1">
    <location>
        <position position="61"/>
    </location>
    <ligand>
        <name>beta-alanine</name>
        <dbReference type="ChEBI" id="CHEBI:57966"/>
    </ligand>
</feature>
<feature type="binding site" evidence="1">
    <location>
        <begin position="149"/>
        <end position="152"/>
    </location>
    <ligand>
        <name>ATP</name>
        <dbReference type="ChEBI" id="CHEBI:30616"/>
    </ligand>
</feature>
<feature type="binding site" evidence="1">
    <location>
        <position position="155"/>
    </location>
    <ligand>
        <name>(R)-pantoate</name>
        <dbReference type="ChEBI" id="CHEBI:15980"/>
    </ligand>
</feature>
<feature type="binding site" evidence="1">
    <location>
        <position position="178"/>
    </location>
    <ligand>
        <name>ATP</name>
        <dbReference type="ChEBI" id="CHEBI:30616"/>
    </ligand>
</feature>
<feature type="binding site" evidence="1">
    <location>
        <begin position="186"/>
        <end position="189"/>
    </location>
    <ligand>
        <name>ATP</name>
        <dbReference type="ChEBI" id="CHEBI:30616"/>
    </ligand>
</feature>
<evidence type="ECO:0000255" key="1">
    <source>
        <dbReference type="HAMAP-Rule" id="MF_00158"/>
    </source>
</evidence>
<accession>A6WJK9</accession>
<dbReference type="EC" id="6.3.2.1" evidence="1"/>
<dbReference type="EMBL" id="CP000753">
    <property type="protein sequence ID" value="ABS06998.1"/>
    <property type="molecule type" value="Genomic_DNA"/>
</dbReference>
<dbReference type="RefSeq" id="WP_012088342.1">
    <property type="nucleotide sequence ID" value="NC_009665.1"/>
</dbReference>
<dbReference type="SMR" id="A6WJK9"/>
<dbReference type="KEGG" id="sbm:Shew185_0844"/>
<dbReference type="HOGENOM" id="CLU_047148_0_0_6"/>
<dbReference type="UniPathway" id="UPA00028">
    <property type="reaction ID" value="UER00005"/>
</dbReference>
<dbReference type="GO" id="GO:0005829">
    <property type="term" value="C:cytosol"/>
    <property type="evidence" value="ECO:0007669"/>
    <property type="project" value="TreeGrafter"/>
</dbReference>
<dbReference type="GO" id="GO:0005524">
    <property type="term" value="F:ATP binding"/>
    <property type="evidence" value="ECO:0007669"/>
    <property type="project" value="UniProtKB-KW"/>
</dbReference>
<dbReference type="GO" id="GO:0004592">
    <property type="term" value="F:pantoate-beta-alanine ligase activity"/>
    <property type="evidence" value="ECO:0007669"/>
    <property type="project" value="UniProtKB-UniRule"/>
</dbReference>
<dbReference type="GO" id="GO:0015940">
    <property type="term" value="P:pantothenate biosynthetic process"/>
    <property type="evidence" value="ECO:0007669"/>
    <property type="project" value="UniProtKB-UniRule"/>
</dbReference>
<dbReference type="CDD" id="cd00560">
    <property type="entry name" value="PanC"/>
    <property type="match status" value="1"/>
</dbReference>
<dbReference type="FunFam" id="3.40.50.620:FF:000013">
    <property type="entry name" value="Pantothenate synthetase"/>
    <property type="match status" value="1"/>
</dbReference>
<dbReference type="Gene3D" id="3.40.50.620">
    <property type="entry name" value="HUPs"/>
    <property type="match status" value="1"/>
</dbReference>
<dbReference type="Gene3D" id="3.30.1300.10">
    <property type="entry name" value="Pantoate-beta-alanine ligase, C-terminal domain"/>
    <property type="match status" value="1"/>
</dbReference>
<dbReference type="HAMAP" id="MF_00158">
    <property type="entry name" value="PanC"/>
    <property type="match status" value="1"/>
</dbReference>
<dbReference type="InterPro" id="IPR004821">
    <property type="entry name" value="Cyt_trans-like"/>
</dbReference>
<dbReference type="InterPro" id="IPR003721">
    <property type="entry name" value="Pantoate_ligase"/>
</dbReference>
<dbReference type="InterPro" id="IPR042176">
    <property type="entry name" value="Pantoate_ligase_C"/>
</dbReference>
<dbReference type="InterPro" id="IPR014729">
    <property type="entry name" value="Rossmann-like_a/b/a_fold"/>
</dbReference>
<dbReference type="NCBIfam" id="TIGR00125">
    <property type="entry name" value="cyt_tran_rel"/>
    <property type="match status" value="1"/>
</dbReference>
<dbReference type="NCBIfam" id="TIGR00018">
    <property type="entry name" value="panC"/>
    <property type="match status" value="1"/>
</dbReference>
<dbReference type="PANTHER" id="PTHR21299">
    <property type="entry name" value="CYTIDYLATE KINASE/PANTOATE-BETA-ALANINE LIGASE"/>
    <property type="match status" value="1"/>
</dbReference>
<dbReference type="PANTHER" id="PTHR21299:SF1">
    <property type="entry name" value="PANTOATE--BETA-ALANINE LIGASE"/>
    <property type="match status" value="1"/>
</dbReference>
<dbReference type="Pfam" id="PF02569">
    <property type="entry name" value="Pantoate_ligase"/>
    <property type="match status" value="1"/>
</dbReference>
<dbReference type="SUPFAM" id="SSF52374">
    <property type="entry name" value="Nucleotidylyl transferase"/>
    <property type="match status" value="1"/>
</dbReference>
<reference key="1">
    <citation type="submission" date="2007-07" db="EMBL/GenBank/DDBJ databases">
        <title>Complete sequence of chromosome of Shewanella baltica OS185.</title>
        <authorList>
            <consortium name="US DOE Joint Genome Institute"/>
            <person name="Copeland A."/>
            <person name="Lucas S."/>
            <person name="Lapidus A."/>
            <person name="Barry K."/>
            <person name="Glavina del Rio T."/>
            <person name="Dalin E."/>
            <person name="Tice H."/>
            <person name="Pitluck S."/>
            <person name="Sims D."/>
            <person name="Brettin T."/>
            <person name="Bruce D."/>
            <person name="Detter J.C."/>
            <person name="Han C."/>
            <person name="Schmutz J."/>
            <person name="Larimer F."/>
            <person name="Land M."/>
            <person name="Hauser L."/>
            <person name="Kyrpides N."/>
            <person name="Mikhailova N."/>
            <person name="Brettar I."/>
            <person name="Rodrigues J."/>
            <person name="Konstantinidis K."/>
            <person name="Tiedje J."/>
            <person name="Richardson P."/>
        </authorList>
    </citation>
    <scope>NUCLEOTIDE SEQUENCE [LARGE SCALE GENOMIC DNA]</scope>
    <source>
        <strain>OS185</strain>
    </source>
</reference>
<keyword id="KW-0067">ATP-binding</keyword>
<keyword id="KW-0963">Cytoplasm</keyword>
<keyword id="KW-0436">Ligase</keyword>
<keyword id="KW-0547">Nucleotide-binding</keyword>
<keyword id="KW-0566">Pantothenate biosynthesis</keyword>
<organism>
    <name type="scientific">Shewanella baltica (strain OS185)</name>
    <dbReference type="NCBI Taxonomy" id="402882"/>
    <lineage>
        <taxon>Bacteria</taxon>
        <taxon>Pseudomonadati</taxon>
        <taxon>Pseudomonadota</taxon>
        <taxon>Gammaproteobacteria</taxon>
        <taxon>Alteromonadales</taxon>
        <taxon>Shewanellaceae</taxon>
        <taxon>Shewanella</taxon>
    </lineage>
</organism>
<proteinExistence type="inferred from homology"/>
<protein>
    <recommendedName>
        <fullName evidence="1">Pantothenate synthetase</fullName>
        <shortName evidence="1">PS</shortName>
        <ecNumber evidence="1">6.3.2.1</ecNumber>
    </recommendedName>
    <alternativeName>
        <fullName evidence="1">Pantoate--beta-alanine ligase</fullName>
    </alternativeName>
    <alternativeName>
        <fullName evidence="1">Pantoate-activating enzyme</fullName>
    </alternativeName>
</protein>
<comment type="function">
    <text evidence="1">Catalyzes the condensation of pantoate with beta-alanine in an ATP-dependent reaction via a pantoyl-adenylate intermediate.</text>
</comment>
<comment type="catalytic activity">
    <reaction evidence="1">
        <text>(R)-pantoate + beta-alanine + ATP = (R)-pantothenate + AMP + diphosphate + H(+)</text>
        <dbReference type="Rhea" id="RHEA:10912"/>
        <dbReference type="ChEBI" id="CHEBI:15378"/>
        <dbReference type="ChEBI" id="CHEBI:15980"/>
        <dbReference type="ChEBI" id="CHEBI:29032"/>
        <dbReference type="ChEBI" id="CHEBI:30616"/>
        <dbReference type="ChEBI" id="CHEBI:33019"/>
        <dbReference type="ChEBI" id="CHEBI:57966"/>
        <dbReference type="ChEBI" id="CHEBI:456215"/>
        <dbReference type="EC" id="6.3.2.1"/>
    </reaction>
</comment>
<comment type="pathway">
    <text evidence="1">Cofactor biosynthesis; (R)-pantothenate biosynthesis; (R)-pantothenate from (R)-pantoate and beta-alanine: step 1/1.</text>
</comment>
<comment type="subunit">
    <text evidence="1">Homodimer.</text>
</comment>
<comment type="subcellular location">
    <subcellularLocation>
        <location evidence="1">Cytoplasm</location>
    </subcellularLocation>
</comment>
<comment type="miscellaneous">
    <text evidence="1">The reaction proceeds by a bi uni uni bi ping pong mechanism.</text>
</comment>
<comment type="similarity">
    <text evidence="1">Belongs to the pantothenate synthetase family.</text>
</comment>